<organism>
    <name type="scientific">Bacillus cytotoxicus (strain DSM 22905 / CIP 110041 / 391-98 / NVH 391-98)</name>
    <dbReference type="NCBI Taxonomy" id="315749"/>
    <lineage>
        <taxon>Bacteria</taxon>
        <taxon>Bacillati</taxon>
        <taxon>Bacillota</taxon>
        <taxon>Bacilli</taxon>
        <taxon>Bacillales</taxon>
        <taxon>Bacillaceae</taxon>
        <taxon>Bacillus</taxon>
        <taxon>Bacillus cereus group</taxon>
    </lineage>
</organism>
<reference key="1">
    <citation type="journal article" date="2008" name="Chem. Biol. Interact.">
        <title>Extending the Bacillus cereus group genomics to putative food-borne pathogens of different toxicity.</title>
        <authorList>
            <person name="Lapidus A."/>
            <person name="Goltsman E."/>
            <person name="Auger S."/>
            <person name="Galleron N."/>
            <person name="Segurens B."/>
            <person name="Dossat C."/>
            <person name="Land M.L."/>
            <person name="Broussolle V."/>
            <person name="Brillard J."/>
            <person name="Guinebretiere M.-H."/>
            <person name="Sanchis V."/>
            <person name="Nguen-the C."/>
            <person name="Lereclus D."/>
            <person name="Richardson P."/>
            <person name="Wincker P."/>
            <person name="Weissenbach J."/>
            <person name="Ehrlich S.D."/>
            <person name="Sorokin A."/>
        </authorList>
    </citation>
    <scope>NUCLEOTIDE SEQUENCE [LARGE SCALE GENOMIC DNA]</scope>
    <source>
        <strain>DSM 22905 / CIP 110041 / 391-98 / NVH 391-98</strain>
    </source>
</reference>
<accession>A7GK19</accession>
<evidence type="ECO:0000255" key="1">
    <source>
        <dbReference type="HAMAP-Rule" id="MF_00508"/>
    </source>
</evidence>
<evidence type="ECO:0000305" key="2"/>
<feature type="chain" id="PRO_1000081536" description="Small ribosomal subunit protein uS10">
    <location>
        <begin position="1"/>
        <end position="102"/>
    </location>
</feature>
<name>RS10_BACCN</name>
<dbReference type="EMBL" id="CP000764">
    <property type="protein sequence ID" value="ABS20477.1"/>
    <property type="molecule type" value="Genomic_DNA"/>
</dbReference>
<dbReference type="RefSeq" id="WP_001040596.1">
    <property type="nucleotide sequence ID" value="NC_009674.1"/>
</dbReference>
<dbReference type="SMR" id="A7GK19"/>
<dbReference type="STRING" id="315749.Bcer98_0103"/>
<dbReference type="GeneID" id="93010944"/>
<dbReference type="KEGG" id="bcy:Bcer98_0103"/>
<dbReference type="eggNOG" id="COG0051">
    <property type="taxonomic scope" value="Bacteria"/>
</dbReference>
<dbReference type="HOGENOM" id="CLU_122625_1_3_9"/>
<dbReference type="OrthoDB" id="9804464at2"/>
<dbReference type="Proteomes" id="UP000002300">
    <property type="component" value="Chromosome"/>
</dbReference>
<dbReference type="GO" id="GO:1990904">
    <property type="term" value="C:ribonucleoprotein complex"/>
    <property type="evidence" value="ECO:0007669"/>
    <property type="project" value="UniProtKB-KW"/>
</dbReference>
<dbReference type="GO" id="GO:0005840">
    <property type="term" value="C:ribosome"/>
    <property type="evidence" value="ECO:0007669"/>
    <property type="project" value="UniProtKB-KW"/>
</dbReference>
<dbReference type="GO" id="GO:0003735">
    <property type="term" value="F:structural constituent of ribosome"/>
    <property type="evidence" value="ECO:0007669"/>
    <property type="project" value="InterPro"/>
</dbReference>
<dbReference type="GO" id="GO:0000049">
    <property type="term" value="F:tRNA binding"/>
    <property type="evidence" value="ECO:0007669"/>
    <property type="project" value="UniProtKB-UniRule"/>
</dbReference>
<dbReference type="GO" id="GO:0006412">
    <property type="term" value="P:translation"/>
    <property type="evidence" value="ECO:0007669"/>
    <property type="project" value="UniProtKB-UniRule"/>
</dbReference>
<dbReference type="FunFam" id="3.30.70.600:FF:000001">
    <property type="entry name" value="30S ribosomal protein S10"/>
    <property type="match status" value="1"/>
</dbReference>
<dbReference type="Gene3D" id="3.30.70.600">
    <property type="entry name" value="Ribosomal protein S10 domain"/>
    <property type="match status" value="1"/>
</dbReference>
<dbReference type="HAMAP" id="MF_00508">
    <property type="entry name" value="Ribosomal_uS10"/>
    <property type="match status" value="1"/>
</dbReference>
<dbReference type="InterPro" id="IPR001848">
    <property type="entry name" value="Ribosomal_uS10"/>
</dbReference>
<dbReference type="InterPro" id="IPR018268">
    <property type="entry name" value="Ribosomal_uS10_CS"/>
</dbReference>
<dbReference type="InterPro" id="IPR027486">
    <property type="entry name" value="Ribosomal_uS10_dom"/>
</dbReference>
<dbReference type="InterPro" id="IPR036838">
    <property type="entry name" value="Ribosomal_uS10_dom_sf"/>
</dbReference>
<dbReference type="NCBIfam" id="NF001861">
    <property type="entry name" value="PRK00596.1"/>
    <property type="match status" value="1"/>
</dbReference>
<dbReference type="NCBIfam" id="TIGR01049">
    <property type="entry name" value="rpsJ_bact"/>
    <property type="match status" value="1"/>
</dbReference>
<dbReference type="PANTHER" id="PTHR11700">
    <property type="entry name" value="30S RIBOSOMAL PROTEIN S10 FAMILY MEMBER"/>
    <property type="match status" value="1"/>
</dbReference>
<dbReference type="Pfam" id="PF00338">
    <property type="entry name" value="Ribosomal_S10"/>
    <property type="match status" value="1"/>
</dbReference>
<dbReference type="PRINTS" id="PR00971">
    <property type="entry name" value="RIBOSOMALS10"/>
</dbReference>
<dbReference type="SMART" id="SM01403">
    <property type="entry name" value="Ribosomal_S10"/>
    <property type="match status" value="1"/>
</dbReference>
<dbReference type="SUPFAM" id="SSF54999">
    <property type="entry name" value="Ribosomal protein S10"/>
    <property type="match status" value="1"/>
</dbReference>
<dbReference type="PROSITE" id="PS00361">
    <property type="entry name" value="RIBOSOMAL_S10"/>
    <property type="match status" value="1"/>
</dbReference>
<proteinExistence type="inferred from homology"/>
<keyword id="KW-0687">Ribonucleoprotein</keyword>
<keyword id="KW-0689">Ribosomal protein</keyword>
<comment type="function">
    <text evidence="1">Involved in the binding of tRNA to the ribosomes.</text>
</comment>
<comment type="subunit">
    <text evidence="1">Part of the 30S ribosomal subunit.</text>
</comment>
<comment type="similarity">
    <text evidence="1">Belongs to the universal ribosomal protein uS10 family.</text>
</comment>
<gene>
    <name evidence="1" type="primary">rpsJ</name>
    <name type="ordered locus">Bcer98_0103</name>
</gene>
<sequence>MAKEKIRIRLKAYDHRILDQSAEKIVETAKRSGATVSGPIPLPTEKTVYTILRAVHKYKDSREQFEMRTHKRLIDIVSPTPQTVDSLMRLDLPSGVDIEIKL</sequence>
<protein>
    <recommendedName>
        <fullName evidence="1">Small ribosomal subunit protein uS10</fullName>
    </recommendedName>
    <alternativeName>
        <fullName evidence="2">30S ribosomal protein S10</fullName>
    </alternativeName>
</protein>